<proteinExistence type="inferred from homology"/>
<feature type="chain" id="PRO_0000232794" description="Protein PsbN">
    <location>
        <begin position="1"/>
        <end position="46"/>
    </location>
</feature>
<feature type="transmembrane region" description="Helical" evidence="1">
    <location>
        <begin position="7"/>
        <end position="27"/>
    </location>
</feature>
<accession>Q7U9I8</accession>
<organism>
    <name type="scientific">Parasynechococcus marenigrum (strain WH8102)</name>
    <dbReference type="NCBI Taxonomy" id="84588"/>
    <lineage>
        <taxon>Bacteria</taxon>
        <taxon>Bacillati</taxon>
        <taxon>Cyanobacteriota</taxon>
        <taxon>Cyanophyceae</taxon>
        <taxon>Synechococcales</taxon>
        <taxon>Prochlorococcaceae</taxon>
        <taxon>Parasynechococcus</taxon>
        <taxon>Parasynechococcus marenigrum</taxon>
    </lineage>
</organism>
<keyword id="KW-0472">Membrane</keyword>
<keyword id="KW-0793">Thylakoid</keyword>
<keyword id="KW-0812">Transmembrane</keyword>
<keyword id="KW-1133">Transmembrane helix</keyword>
<name>PSBN_PARMW</name>
<gene>
    <name evidence="1" type="primary">psbN</name>
    <name type="ordered locus">SYNW0268</name>
</gene>
<reference key="1">
    <citation type="journal article" date="2003" name="Nature">
        <title>The genome of a motile marine Synechococcus.</title>
        <authorList>
            <person name="Palenik B."/>
            <person name="Brahamsha B."/>
            <person name="Larimer F.W."/>
            <person name="Land M.L."/>
            <person name="Hauser L."/>
            <person name="Chain P."/>
            <person name="Lamerdin J.E."/>
            <person name="Regala W."/>
            <person name="Allen E.E."/>
            <person name="McCarren J."/>
            <person name="Paulsen I.T."/>
            <person name="Dufresne A."/>
            <person name="Partensky F."/>
            <person name="Webb E.A."/>
            <person name="Waterbury J."/>
        </authorList>
    </citation>
    <scope>NUCLEOTIDE SEQUENCE [LARGE SCALE GENOMIC DNA]</scope>
    <source>
        <strain>WH8102</strain>
    </source>
</reference>
<comment type="function">
    <text evidence="1">May play a role in photosystem I and II biogenesis.</text>
</comment>
<comment type="subcellular location">
    <subcellularLocation>
        <location evidence="1">Cellular thylakoid membrane</location>
        <topology evidence="1">Single-pass membrane protein</topology>
    </subcellularLocation>
</comment>
<comment type="similarity">
    <text evidence="1">Belongs to the PsbN family.</text>
</comment>
<comment type="caution">
    <text evidence="1">Originally thought to be a component of PSII; based on experiments in Synechocystis, N.tabacum and barley, and its absence from PSII in T.elongatus and T.vulcanus, this is probably not true.</text>
</comment>
<dbReference type="EMBL" id="BX569689">
    <property type="protein sequence ID" value="CAE06783.1"/>
    <property type="molecule type" value="Genomic_DNA"/>
</dbReference>
<dbReference type="RefSeq" id="WP_011127143.1">
    <property type="nucleotide sequence ID" value="NC_005070.1"/>
</dbReference>
<dbReference type="SMR" id="Q7U9I8"/>
<dbReference type="STRING" id="84588.SYNW0268"/>
<dbReference type="KEGG" id="syw:SYNW0268"/>
<dbReference type="eggNOG" id="ENOG50339MH">
    <property type="taxonomic scope" value="Bacteria"/>
</dbReference>
<dbReference type="HOGENOM" id="CLU_205504_1_0_3"/>
<dbReference type="BioCyc" id="MetaCyc:TX72_RS01340-MONOMER"/>
<dbReference type="Proteomes" id="UP000001422">
    <property type="component" value="Chromosome"/>
</dbReference>
<dbReference type="GO" id="GO:0031676">
    <property type="term" value="C:plasma membrane-derived thylakoid membrane"/>
    <property type="evidence" value="ECO:0007669"/>
    <property type="project" value="UniProtKB-SubCell"/>
</dbReference>
<dbReference type="GO" id="GO:0015979">
    <property type="term" value="P:photosynthesis"/>
    <property type="evidence" value="ECO:0007669"/>
    <property type="project" value="InterPro"/>
</dbReference>
<dbReference type="HAMAP" id="MF_00293">
    <property type="entry name" value="PSII_PsbN"/>
    <property type="match status" value="1"/>
</dbReference>
<dbReference type="InterPro" id="IPR003398">
    <property type="entry name" value="PSII_PsbN"/>
</dbReference>
<dbReference type="NCBIfam" id="NF009650">
    <property type="entry name" value="PRK13183.1"/>
    <property type="match status" value="1"/>
</dbReference>
<dbReference type="PANTHER" id="PTHR35326">
    <property type="entry name" value="PROTEIN PSBN"/>
    <property type="match status" value="1"/>
</dbReference>
<dbReference type="PANTHER" id="PTHR35326:SF3">
    <property type="entry name" value="PROTEIN PSBN"/>
    <property type="match status" value="1"/>
</dbReference>
<dbReference type="Pfam" id="PF02468">
    <property type="entry name" value="PsbN"/>
    <property type="match status" value="1"/>
</dbReference>
<evidence type="ECO:0000255" key="1">
    <source>
        <dbReference type="HAMAP-Rule" id="MF_00293"/>
    </source>
</evidence>
<sequence length="46" mass="4767">METSSPALSVAIGVLAVLLGMTGFGVYQAFGPPSKALDDPFDDHED</sequence>
<protein>
    <recommendedName>
        <fullName evidence="1">Protein PsbN</fullName>
    </recommendedName>
</protein>